<comment type="function">
    <text evidence="1">Catalyzes the reversible phosphorylation of S-methyl-5'-thioadenosine (MTA) to adenine and 5-methylthioribose-1-phosphate. Involved in the breakdown of MTA, a major by-product of polyamine biosynthesis. Responsible for the first step in the methionine salvage pathway after MTA has been generated from S-adenosylmethionine. Has broad substrate specificity with 6-aminopurine nucleosides as preferred substrates.</text>
</comment>
<comment type="catalytic activity">
    <reaction evidence="1">
        <text>S-methyl-5'-thioadenosine + phosphate = 5-(methylsulfanyl)-alpha-D-ribose 1-phosphate + adenine</text>
        <dbReference type="Rhea" id="RHEA:11852"/>
        <dbReference type="ChEBI" id="CHEBI:16708"/>
        <dbReference type="ChEBI" id="CHEBI:17509"/>
        <dbReference type="ChEBI" id="CHEBI:43474"/>
        <dbReference type="ChEBI" id="CHEBI:58533"/>
        <dbReference type="EC" id="2.4.2.28"/>
    </reaction>
</comment>
<comment type="pathway">
    <text evidence="1">Amino-acid biosynthesis; L-methionine biosynthesis via salvage pathway; S-methyl-5-thio-alpha-D-ribose 1-phosphate from S-methyl-5'-thioadenosine (phosphorylase route): step 1/1.</text>
</comment>
<comment type="subunit">
    <text evidence="1">Homotrimer.</text>
</comment>
<comment type="subcellular location">
    <subcellularLocation>
        <location evidence="1 2">Cytoplasm</location>
    </subcellularLocation>
    <subcellularLocation>
        <location evidence="1 2">Nucleus</location>
    </subcellularLocation>
</comment>
<comment type="similarity">
    <text evidence="1">Belongs to the PNP/MTAP phosphorylase family. MTAP subfamily.</text>
</comment>
<evidence type="ECO:0000255" key="1">
    <source>
        <dbReference type="HAMAP-Rule" id="MF_03155"/>
    </source>
</evidence>
<evidence type="ECO:0000269" key="2">
    <source>
    </source>
</evidence>
<accession>Q09816</accession>
<sequence>MNKQAEPILLGVIGGSGFYDLPGFDIVESVNPITPWGYPASPISIARTTSGFLIAFLARHGVGHIYTPTEVPSRANIAALKSLGVLAIVSFSAVGSLREDIPPEDFVLPTQIIDRTLCARPNTFFESGCVAHVSFGDPFDQDLYEILSSCGSNLKNGSKLHTKRKGDDLTVVCMEGPAFSTRAESNLYRSWGASIINMSVIPEAKLAREAEIAYQMVCMATDYDCWRMNEEPVTVETVMEHISNNKDNAKIFLLEAVKKLEAPLLQGFLGRNLRESVQNGIQTNHKHRNPDAIRRLQFLFPNLTIPH</sequence>
<keyword id="KW-0963">Cytoplasm</keyword>
<keyword id="KW-0328">Glycosyltransferase</keyword>
<keyword id="KW-0539">Nucleus</keyword>
<keyword id="KW-0660">Purine salvage</keyword>
<keyword id="KW-1185">Reference proteome</keyword>
<keyword id="KW-0808">Transferase</keyword>
<protein>
    <recommendedName>
        <fullName evidence="1">S-methyl-5'-thioadenosine phosphorylase</fullName>
        <ecNumber evidence="1">2.4.2.28</ecNumber>
    </recommendedName>
    <alternativeName>
        <fullName evidence="1">5'-methylthioadenosine phosphorylase</fullName>
        <shortName evidence="1">MTA phosphorylase</shortName>
        <shortName evidence="1">MTAP</shortName>
        <shortName evidence="1">MTAPase</shortName>
    </alternativeName>
</protein>
<feature type="chain" id="PRO_0000184557" description="S-methyl-5'-thioadenosine phosphorylase">
    <location>
        <begin position="1"/>
        <end position="307"/>
    </location>
</feature>
<feature type="binding site" evidence="1">
    <location>
        <position position="16"/>
    </location>
    <ligand>
        <name>phosphate</name>
        <dbReference type="ChEBI" id="CHEBI:43474"/>
    </ligand>
</feature>
<feature type="binding site" evidence="1">
    <location>
        <begin position="59"/>
        <end position="60"/>
    </location>
    <ligand>
        <name>phosphate</name>
        <dbReference type="ChEBI" id="CHEBI:43474"/>
    </ligand>
</feature>
<feature type="binding site" evidence="1">
    <location>
        <begin position="92"/>
        <end position="93"/>
    </location>
    <ligand>
        <name>phosphate</name>
        <dbReference type="ChEBI" id="CHEBI:43474"/>
    </ligand>
</feature>
<feature type="binding site" evidence="1">
    <location>
        <position position="198"/>
    </location>
    <ligand>
        <name>substrate</name>
    </ligand>
</feature>
<feature type="binding site" evidence="1">
    <location>
        <position position="199"/>
    </location>
    <ligand>
        <name>phosphate</name>
        <dbReference type="ChEBI" id="CHEBI:43474"/>
    </ligand>
</feature>
<feature type="binding site" evidence="1">
    <location>
        <begin position="222"/>
        <end position="224"/>
    </location>
    <ligand>
        <name>substrate</name>
    </ligand>
</feature>
<feature type="site" description="Important for substrate specificity" evidence="1">
    <location>
        <position position="180"/>
    </location>
</feature>
<feature type="site" description="Important for substrate specificity" evidence="1">
    <location>
        <position position="235"/>
    </location>
</feature>
<reference key="1">
    <citation type="journal article" date="2002" name="Nature">
        <title>The genome sequence of Schizosaccharomyces pombe.</title>
        <authorList>
            <person name="Wood V."/>
            <person name="Gwilliam R."/>
            <person name="Rajandream M.A."/>
            <person name="Lyne M.H."/>
            <person name="Lyne R."/>
            <person name="Stewart A."/>
            <person name="Sgouros J.G."/>
            <person name="Peat N."/>
            <person name="Hayles J."/>
            <person name="Baker S.G."/>
            <person name="Basham D."/>
            <person name="Bowman S."/>
            <person name="Brooks K."/>
            <person name="Brown D."/>
            <person name="Brown S."/>
            <person name="Chillingworth T."/>
            <person name="Churcher C.M."/>
            <person name="Collins M."/>
            <person name="Connor R."/>
            <person name="Cronin A."/>
            <person name="Davis P."/>
            <person name="Feltwell T."/>
            <person name="Fraser A."/>
            <person name="Gentles S."/>
            <person name="Goble A."/>
            <person name="Hamlin N."/>
            <person name="Harris D.E."/>
            <person name="Hidalgo J."/>
            <person name="Hodgson G."/>
            <person name="Holroyd S."/>
            <person name="Hornsby T."/>
            <person name="Howarth S."/>
            <person name="Huckle E.J."/>
            <person name="Hunt S."/>
            <person name="Jagels K."/>
            <person name="James K.D."/>
            <person name="Jones L."/>
            <person name="Jones M."/>
            <person name="Leather S."/>
            <person name="McDonald S."/>
            <person name="McLean J."/>
            <person name="Mooney P."/>
            <person name="Moule S."/>
            <person name="Mungall K.L."/>
            <person name="Murphy L.D."/>
            <person name="Niblett D."/>
            <person name="Odell C."/>
            <person name="Oliver K."/>
            <person name="O'Neil S."/>
            <person name="Pearson D."/>
            <person name="Quail M.A."/>
            <person name="Rabbinowitsch E."/>
            <person name="Rutherford K.M."/>
            <person name="Rutter S."/>
            <person name="Saunders D."/>
            <person name="Seeger K."/>
            <person name="Sharp S."/>
            <person name="Skelton J."/>
            <person name="Simmonds M.N."/>
            <person name="Squares R."/>
            <person name="Squares S."/>
            <person name="Stevens K."/>
            <person name="Taylor K."/>
            <person name="Taylor R.G."/>
            <person name="Tivey A."/>
            <person name="Walsh S.V."/>
            <person name="Warren T."/>
            <person name="Whitehead S."/>
            <person name="Woodward J.R."/>
            <person name="Volckaert G."/>
            <person name="Aert R."/>
            <person name="Robben J."/>
            <person name="Grymonprez B."/>
            <person name="Weltjens I."/>
            <person name="Vanstreels E."/>
            <person name="Rieger M."/>
            <person name="Schaefer M."/>
            <person name="Mueller-Auer S."/>
            <person name="Gabel C."/>
            <person name="Fuchs M."/>
            <person name="Duesterhoeft A."/>
            <person name="Fritzc C."/>
            <person name="Holzer E."/>
            <person name="Moestl D."/>
            <person name="Hilbert H."/>
            <person name="Borzym K."/>
            <person name="Langer I."/>
            <person name="Beck A."/>
            <person name="Lehrach H."/>
            <person name="Reinhardt R."/>
            <person name="Pohl T.M."/>
            <person name="Eger P."/>
            <person name="Zimmermann W."/>
            <person name="Wedler H."/>
            <person name="Wambutt R."/>
            <person name="Purnelle B."/>
            <person name="Goffeau A."/>
            <person name="Cadieu E."/>
            <person name="Dreano S."/>
            <person name="Gloux S."/>
            <person name="Lelaure V."/>
            <person name="Mottier S."/>
            <person name="Galibert F."/>
            <person name="Aves S.J."/>
            <person name="Xiang Z."/>
            <person name="Hunt C."/>
            <person name="Moore K."/>
            <person name="Hurst S.M."/>
            <person name="Lucas M."/>
            <person name="Rochet M."/>
            <person name="Gaillardin C."/>
            <person name="Tallada V.A."/>
            <person name="Garzon A."/>
            <person name="Thode G."/>
            <person name="Daga R.R."/>
            <person name="Cruzado L."/>
            <person name="Jimenez J."/>
            <person name="Sanchez M."/>
            <person name="del Rey F."/>
            <person name="Benito J."/>
            <person name="Dominguez A."/>
            <person name="Revuelta J.L."/>
            <person name="Moreno S."/>
            <person name="Armstrong J."/>
            <person name="Forsburg S.L."/>
            <person name="Cerutti L."/>
            <person name="Lowe T."/>
            <person name="McCombie W.R."/>
            <person name="Paulsen I."/>
            <person name="Potashkin J."/>
            <person name="Shpakovski G.V."/>
            <person name="Ussery D."/>
            <person name="Barrell B.G."/>
            <person name="Nurse P."/>
        </authorList>
    </citation>
    <scope>NUCLEOTIDE SEQUENCE [LARGE SCALE GENOMIC DNA]</scope>
    <source>
        <strain>972 / ATCC 24843</strain>
    </source>
</reference>
<reference key="2">
    <citation type="journal article" date="2006" name="Nat. Biotechnol.">
        <title>ORFeome cloning and global analysis of protein localization in the fission yeast Schizosaccharomyces pombe.</title>
        <authorList>
            <person name="Matsuyama A."/>
            <person name="Arai R."/>
            <person name="Yashiroda Y."/>
            <person name="Shirai A."/>
            <person name="Kamata A."/>
            <person name="Sekido S."/>
            <person name="Kobayashi Y."/>
            <person name="Hashimoto A."/>
            <person name="Hamamoto M."/>
            <person name="Hiraoka Y."/>
            <person name="Horinouchi S."/>
            <person name="Yoshida M."/>
        </authorList>
    </citation>
    <scope>SUBCELLULAR LOCATION [LARGE SCALE ANALYSIS]</scope>
</reference>
<name>MTAP_SCHPO</name>
<dbReference type="EC" id="2.4.2.28" evidence="1"/>
<dbReference type="EMBL" id="CU329670">
    <property type="protein sequence ID" value="CAA91190.1"/>
    <property type="molecule type" value="Genomic_DNA"/>
</dbReference>
<dbReference type="PIR" id="S62472">
    <property type="entry name" value="S62472"/>
</dbReference>
<dbReference type="SMR" id="Q09816"/>
<dbReference type="BioGRID" id="278782">
    <property type="interactions" value="6"/>
</dbReference>
<dbReference type="FunCoup" id="Q09816">
    <property type="interactions" value="469"/>
</dbReference>
<dbReference type="STRING" id="284812.Q09816"/>
<dbReference type="iPTMnet" id="Q09816"/>
<dbReference type="PaxDb" id="4896-SPAC16C9.02c.1"/>
<dbReference type="EnsemblFungi" id="SPAC16C9.02c.1">
    <property type="protein sequence ID" value="SPAC16C9.02c.1:pep"/>
    <property type="gene ID" value="SPAC16C9.02c"/>
</dbReference>
<dbReference type="KEGG" id="spo:2542316"/>
<dbReference type="PomBase" id="SPAC16C9.02c"/>
<dbReference type="VEuPathDB" id="FungiDB:SPAC16C9.02c"/>
<dbReference type="eggNOG" id="KOG3985">
    <property type="taxonomic scope" value="Eukaryota"/>
</dbReference>
<dbReference type="HOGENOM" id="CLU_054456_0_1_1"/>
<dbReference type="InParanoid" id="Q09816"/>
<dbReference type="OMA" id="ADPFCPE"/>
<dbReference type="PhylomeDB" id="Q09816"/>
<dbReference type="Reactome" id="R-SPO-1237112">
    <property type="pathway name" value="Methionine salvage pathway"/>
</dbReference>
<dbReference type="UniPathway" id="UPA00904">
    <property type="reaction ID" value="UER00873"/>
</dbReference>
<dbReference type="PRO" id="PR:Q09816"/>
<dbReference type="Proteomes" id="UP000002485">
    <property type="component" value="Chromosome I"/>
</dbReference>
<dbReference type="GO" id="GO:0005829">
    <property type="term" value="C:cytosol"/>
    <property type="evidence" value="ECO:0007005"/>
    <property type="project" value="PomBase"/>
</dbReference>
<dbReference type="GO" id="GO:0005634">
    <property type="term" value="C:nucleus"/>
    <property type="evidence" value="ECO:0007005"/>
    <property type="project" value="PomBase"/>
</dbReference>
<dbReference type="GO" id="GO:0017061">
    <property type="term" value="F:S-methyl-5-thioadenosine phosphorylase activity"/>
    <property type="evidence" value="ECO:0000318"/>
    <property type="project" value="GO_Central"/>
</dbReference>
<dbReference type="GO" id="GO:0019509">
    <property type="term" value="P:L-methionine salvage from methylthioadenosine"/>
    <property type="evidence" value="ECO:0000318"/>
    <property type="project" value="GO_Central"/>
</dbReference>
<dbReference type="GO" id="GO:0006166">
    <property type="term" value="P:purine ribonucleoside salvage"/>
    <property type="evidence" value="ECO:0007669"/>
    <property type="project" value="UniProtKB-KW"/>
</dbReference>
<dbReference type="CDD" id="cd09010">
    <property type="entry name" value="MTAP_SsMTAPII_like_MTIP"/>
    <property type="match status" value="1"/>
</dbReference>
<dbReference type="FunFam" id="3.40.50.1580:FF:000008">
    <property type="entry name" value="S-methyl-5'-thioadenosine phosphorylase"/>
    <property type="match status" value="1"/>
</dbReference>
<dbReference type="Gene3D" id="3.40.50.1580">
    <property type="entry name" value="Nucleoside phosphorylase domain"/>
    <property type="match status" value="1"/>
</dbReference>
<dbReference type="HAMAP" id="MF_01963">
    <property type="entry name" value="MTAP"/>
    <property type="match status" value="1"/>
</dbReference>
<dbReference type="InterPro" id="IPR010044">
    <property type="entry name" value="MTAP"/>
</dbReference>
<dbReference type="InterPro" id="IPR000845">
    <property type="entry name" value="Nucleoside_phosphorylase_d"/>
</dbReference>
<dbReference type="InterPro" id="IPR035994">
    <property type="entry name" value="Nucleoside_phosphorylase_sf"/>
</dbReference>
<dbReference type="InterPro" id="IPR018099">
    <property type="entry name" value="Purine_phosphorylase-2_CS"/>
</dbReference>
<dbReference type="NCBIfam" id="TIGR01694">
    <property type="entry name" value="MTAP"/>
    <property type="match status" value="1"/>
</dbReference>
<dbReference type="PANTHER" id="PTHR42679">
    <property type="entry name" value="S-METHYL-5'-THIOADENOSINE PHOSPHORYLASE"/>
    <property type="match status" value="1"/>
</dbReference>
<dbReference type="PANTHER" id="PTHR42679:SF2">
    <property type="entry name" value="S-METHYL-5'-THIOADENOSINE PHOSPHORYLASE"/>
    <property type="match status" value="1"/>
</dbReference>
<dbReference type="Pfam" id="PF01048">
    <property type="entry name" value="PNP_UDP_1"/>
    <property type="match status" value="1"/>
</dbReference>
<dbReference type="SUPFAM" id="SSF53167">
    <property type="entry name" value="Purine and uridine phosphorylases"/>
    <property type="match status" value="1"/>
</dbReference>
<dbReference type="PROSITE" id="PS01240">
    <property type="entry name" value="PNP_MTAP_2"/>
    <property type="match status" value="1"/>
</dbReference>
<organism>
    <name type="scientific">Schizosaccharomyces pombe (strain 972 / ATCC 24843)</name>
    <name type="common">Fission yeast</name>
    <dbReference type="NCBI Taxonomy" id="284812"/>
    <lineage>
        <taxon>Eukaryota</taxon>
        <taxon>Fungi</taxon>
        <taxon>Dikarya</taxon>
        <taxon>Ascomycota</taxon>
        <taxon>Taphrinomycotina</taxon>
        <taxon>Schizosaccharomycetes</taxon>
        <taxon>Schizosaccharomycetales</taxon>
        <taxon>Schizosaccharomycetaceae</taxon>
        <taxon>Schizosaccharomyces</taxon>
    </lineage>
</organism>
<proteinExistence type="inferred from homology"/>
<gene>
    <name type="ORF">SPAC16C9.02c</name>
</gene>